<dbReference type="EC" id="2.9.1.1" evidence="1"/>
<dbReference type="EMBL" id="CP001048">
    <property type="protein sequence ID" value="ACC91100.1"/>
    <property type="molecule type" value="Genomic_DNA"/>
</dbReference>
<dbReference type="RefSeq" id="WP_011193344.1">
    <property type="nucleotide sequence ID" value="NZ_CP009780.1"/>
</dbReference>
<dbReference type="SMR" id="B2K7H8"/>
<dbReference type="GeneID" id="49784097"/>
<dbReference type="KEGG" id="ypb:YPTS_4154"/>
<dbReference type="PATRIC" id="fig|502801.10.peg.3627"/>
<dbReference type="UniPathway" id="UPA00906">
    <property type="reaction ID" value="UER00896"/>
</dbReference>
<dbReference type="GO" id="GO:0005737">
    <property type="term" value="C:cytoplasm"/>
    <property type="evidence" value="ECO:0007669"/>
    <property type="project" value="UniProtKB-SubCell"/>
</dbReference>
<dbReference type="GO" id="GO:0004125">
    <property type="term" value="F:L-seryl-tRNA(Sec) selenium transferase activity"/>
    <property type="evidence" value="ECO:0007669"/>
    <property type="project" value="UniProtKB-UniRule"/>
</dbReference>
<dbReference type="GO" id="GO:0001717">
    <property type="term" value="P:conversion of seryl-tRNAsec to selenocys-tRNAsec"/>
    <property type="evidence" value="ECO:0007669"/>
    <property type="project" value="UniProtKB-UniRule"/>
</dbReference>
<dbReference type="GO" id="GO:0001514">
    <property type="term" value="P:selenocysteine incorporation"/>
    <property type="evidence" value="ECO:0007669"/>
    <property type="project" value="UniProtKB-UniRule"/>
</dbReference>
<dbReference type="FunFam" id="3.40.640.10:FF:000028">
    <property type="entry name" value="L-seryl-tRNA(Sec) selenium transferase"/>
    <property type="match status" value="1"/>
</dbReference>
<dbReference type="Gene3D" id="3.90.1150.180">
    <property type="match status" value="1"/>
</dbReference>
<dbReference type="Gene3D" id="3.40.640.10">
    <property type="entry name" value="Type I PLP-dependent aspartate aminotransferase-like (Major domain)"/>
    <property type="match status" value="1"/>
</dbReference>
<dbReference type="HAMAP" id="MF_00423">
    <property type="entry name" value="SelA"/>
    <property type="match status" value="1"/>
</dbReference>
<dbReference type="InterPro" id="IPR015424">
    <property type="entry name" value="PyrdxlP-dep_Trfase"/>
</dbReference>
<dbReference type="InterPro" id="IPR015421">
    <property type="entry name" value="PyrdxlP-dep_Trfase_major"/>
</dbReference>
<dbReference type="InterPro" id="IPR018319">
    <property type="entry name" value="SelA-like"/>
</dbReference>
<dbReference type="InterPro" id="IPR004534">
    <property type="entry name" value="SelA_trans"/>
</dbReference>
<dbReference type="InterPro" id="IPR025862">
    <property type="entry name" value="SelA_trans_N_dom"/>
</dbReference>
<dbReference type="NCBIfam" id="TIGR00474">
    <property type="entry name" value="selA"/>
    <property type="match status" value="1"/>
</dbReference>
<dbReference type="PANTHER" id="PTHR32328">
    <property type="entry name" value="L-SERYL-TRNA(SEC) SELENIUM TRANSFERASE"/>
    <property type="match status" value="1"/>
</dbReference>
<dbReference type="PANTHER" id="PTHR32328:SF0">
    <property type="entry name" value="L-SERYL-TRNA(SEC) SELENIUM TRANSFERASE"/>
    <property type="match status" value="1"/>
</dbReference>
<dbReference type="Pfam" id="PF12390">
    <property type="entry name" value="Se-cys_synth_N"/>
    <property type="match status" value="1"/>
</dbReference>
<dbReference type="Pfam" id="PF03841">
    <property type="entry name" value="SelA"/>
    <property type="match status" value="1"/>
</dbReference>
<dbReference type="SUPFAM" id="SSF53383">
    <property type="entry name" value="PLP-dependent transferases"/>
    <property type="match status" value="1"/>
</dbReference>
<keyword id="KW-0963">Cytoplasm</keyword>
<keyword id="KW-0648">Protein biosynthesis</keyword>
<keyword id="KW-0663">Pyridoxal phosphate</keyword>
<keyword id="KW-0711">Selenium</keyword>
<keyword id="KW-0808">Transferase</keyword>
<comment type="function">
    <text evidence="1">Converts seryl-tRNA(Sec) to selenocysteinyl-tRNA(Sec) required for selenoprotein biosynthesis.</text>
</comment>
<comment type="catalytic activity">
    <reaction evidence="1">
        <text>L-seryl-tRNA(Sec) + selenophosphate + H(+) = L-selenocysteinyl-tRNA(Sec) + phosphate</text>
        <dbReference type="Rhea" id="RHEA:22728"/>
        <dbReference type="Rhea" id="RHEA-COMP:9742"/>
        <dbReference type="Rhea" id="RHEA-COMP:9743"/>
        <dbReference type="ChEBI" id="CHEBI:15378"/>
        <dbReference type="ChEBI" id="CHEBI:16144"/>
        <dbReference type="ChEBI" id="CHEBI:43474"/>
        <dbReference type="ChEBI" id="CHEBI:78533"/>
        <dbReference type="ChEBI" id="CHEBI:78573"/>
        <dbReference type="EC" id="2.9.1.1"/>
    </reaction>
</comment>
<comment type="cofactor">
    <cofactor evidence="1">
        <name>pyridoxal 5'-phosphate</name>
        <dbReference type="ChEBI" id="CHEBI:597326"/>
    </cofactor>
</comment>
<comment type="pathway">
    <text evidence="1">Aminoacyl-tRNA biosynthesis; selenocysteinyl-tRNA(Sec) biosynthesis; selenocysteinyl-tRNA(Sec) from L-seryl-tRNA(Sec) (bacterial route): step 1/1.</text>
</comment>
<comment type="subunit">
    <text evidence="1">Homodecamer; pentamer of dimers. Binds only one seryl-tRNA(Sec) per dimer.</text>
</comment>
<comment type="subcellular location">
    <subcellularLocation>
        <location evidence="1">Cytoplasm</location>
    </subcellularLocation>
</comment>
<comment type="similarity">
    <text evidence="1">Belongs to the SelA family.</text>
</comment>
<accession>B2K7H8</accession>
<evidence type="ECO:0000255" key="1">
    <source>
        <dbReference type="HAMAP-Rule" id="MF_00423"/>
    </source>
</evidence>
<protein>
    <recommendedName>
        <fullName evidence="1">L-seryl-tRNA(Sec) selenium transferase</fullName>
        <ecNumber evidence="1">2.9.1.1</ecNumber>
    </recommendedName>
    <alternativeName>
        <fullName evidence="1">Selenocysteine synthase</fullName>
        <shortName evidence="1">Sec synthase</shortName>
    </alternativeName>
    <alternativeName>
        <fullName evidence="1">Selenocysteinyl-tRNA(Sec) synthase</fullName>
    </alternativeName>
</protein>
<feature type="chain" id="PRO_1000124159" description="L-seryl-tRNA(Sec) selenium transferase">
    <location>
        <begin position="1"/>
        <end position="462"/>
    </location>
</feature>
<feature type="modified residue" description="N6-(pyridoxal phosphate)lysine" evidence="1">
    <location>
        <position position="294"/>
    </location>
</feature>
<proteinExistence type="inferred from homology"/>
<organism>
    <name type="scientific">Yersinia pseudotuberculosis serotype IB (strain PB1/+)</name>
    <dbReference type="NCBI Taxonomy" id="502801"/>
    <lineage>
        <taxon>Bacteria</taxon>
        <taxon>Pseudomonadati</taxon>
        <taxon>Pseudomonadota</taxon>
        <taxon>Gammaproteobacteria</taxon>
        <taxon>Enterobacterales</taxon>
        <taxon>Yersiniaceae</taxon>
        <taxon>Yersinia</taxon>
    </lineage>
</organism>
<name>SELA_YERPB</name>
<sequence>MSAEPHPLYRQLPAIDRLLNEPEMAPLLAEYGPVLLADTLRQLQAEAREYIGQFHTLADWCADWPAALRQRLNQRQPALKPVFNLTGTVLHTNLGRAPLAESAIAAVTDAMRSAVTLEYSLEGAGRGHRDRAVADLLCALTGAEDACIVNNNAAAVFLLLTVMAAGKQVVVSRGELVEIGGAFRIPDVMRQAGCDLVEVGTTNRTHLKDYRQAINENTGLLMKVHTSNYSIEGFTAAVSEQQLAALGQECSIPTATDLGSGSLVDMTRYGLPAEPMPQQLIAAGVDLVTFSGDKLLGGPQAGIILGKKQWIERLQQHPLKRALRADKMTLAALDATLRLYQQPDRLVEQLPSLRLLTRPASEIAACAQRLLAPLIACYGTDFTLDIESCWSQIGSGSLPVDRLPSWALTFTPKDGRGSTLEALTARWRTLTKPVIGRVADGRLWLDLRCLEDEAALLRELAS</sequence>
<gene>
    <name evidence="1" type="primary">selA</name>
    <name type="ordered locus">YPTS_4154</name>
</gene>
<reference key="1">
    <citation type="submission" date="2008-04" db="EMBL/GenBank/DDBJ databases">
        <title>Complete sequence of Yersinia pseudotuberculosis PB1/+.</title>
        <authorList>
            <person name="Copeland A."/>
            <person name="Lucas S."/>
            <person name="Lapidus A."/>
            <person name="Glavina del Rio T."/>
            <person name="Dalin E."/>
            <person name="Tice H."/>
            <person name="Bruce D."/>
            <person name="Goodwin L."/>
            <person name="Pitluck S."/>
            <person name="Munk A.C."/>
            <person name="Brettin T."/>
            <person name="Detter J.C."/>
            <person name="Han C."/>
            <person name="Tapia R."/>
            <person name="Schmutz J."/>
            <person name="Larimer F."/>
            <person name="Land M."/>
            <person name="Hauser L."/>
            <person name="Challacombe J.F."/>
            <person name="Green L."/>
            <person name="Lindler L.E."/>
            <person name="Nikolich M.P."/>
            <person name="Richardson P."/>
        </authorList>
    </citation>
    <scope>NUCLEOTIDE SEQUENCE [LARGE SCALE GENOMIC DNA]</scope>
    <source>
        <strain>PB1/+</strain>
    </source>
</reference>